<sequence>MIQTITDLSALRALVTGWKREGLRVALVPTMGNLHAGHYSLVMLARQYADRVVSSVFVNPTQFGPNEDFARYPRTPEADMRGLEDAGCDALWLPDVDTMYPLGTALATPIHAPGVSDVLEGVCRPGHFDGVCTVVARLFNQVQPDVAAFGKKDYQQLAVIRQMVADLAFPIEILGGSIVREADGLAMSSRNQYLSADDRPISAQIRKVLLQMRDSHAAGVPRLQVEAAATQALEAVGFRVDYTALRLPDLSEPDDGASNPAAGPRVALIAARIGSTRLIDNLEF</sequence>
<proteinExistence type="inferred from homology"/>
<reference key="1">
    <citation type="journal article" date="2008" name="J. Biotechnol.">
        <title>The genome of Xanthomonas campestris pv. campestris B100 and its use for the reconstruction of metabolic pathways involved in xanthan biosynthesis.</title>
        <authorList>
            <person name="Vorhoelter F.-J."/>
            <person name="Schneiker S."/>
            <person name="Goesmann A."/>
            <person name="Krause L."/>
            <person name="Bekel T."/>
            <person name="Kaiser O."/>
            <person name="Linke B."/>
            <person name="Patschkowski T."/>
            <person name="Rueckert C."/>
            <person name="Schmid J."/>
            <person name="Sidhu V.K."/>
            <person name="Sieber V."/>
            <person name="Tauch A."/>
            <person name="Watt S.A."/>
            <person name="Weisshaar B."/>
            <person name="Becker A."/>
            <person name="Niehaus K."/>
            <person name="Puehler A."/>
        </authorList>
    </citation>
    <scope>NUCLEOTIDE SEQUENCE [LARGE SCALE GENOMIC DNA]</scope>
    <source>
        <strain>B100</strain>
    </source>
</reference>
<evidence type="ECO:0000255" key="1">
    <source>
        <dbReference type="HAMAP-Rule" id="MF_00158"/>
    </source>
</evidence>
<organism>
    <name type="scientific">Xanthomonas campestris pv. campestris (strain B100)</name>
    <dbReference type="NCBI Taxonomy" id="509169"/>
    <lineage>
        <taxon>Bacteria</taxon>
        <taxon>Pseudomonadati</taxon>
        <taxon>Pseudomonadota</taxon>
        <taxon>Gammaproteobacteria</taxon>
        <taxon>Lysobacterales</taxon>
        <taxon>Lysobacteraceae</taxon>
        <taxon>Xanthomonas</taxon>
    </lineage>
</organism>
<accession>B0RTU0</accession>
<gene>
    <name evidence="1" type="primary">panC</name>
    <name type="ordered locus">xcc-b100_2494</name>
</gene>
<feature type="chain" id="PRO_1000097128" description="Pantothenate synthetase">
    <location>
        <begin position="1"/>
        <end position="284"/>
    </location>
</feature>
<feature type="active site" description="Proton donor" evidence="1">
    <location>
        <position position="38"/>
    </location>
</feature>
<feature type="binding site" evidence="1">
    <location>
        <begin position="31"/>
        <end position="38"/>
    </location>
    <ligand>
        <name>ATP</name>
        <dbReference type="ChEBI" id="CHEBI:30616"/>
    </ligand>
</feature>
<feature type="binding site" evidence="1">
    <location>
        <position position="62"/>
    </location>
    <ligand>
        <name>(R)-pantoate</name>
        <dbReference type="ChEBI" id="CHEBI:15980"/>
    </ligand>
</feature>
<feature type="binding site" evidence="1">
    <location>
        <position position="62"/>
    </location>
    <ligand>
        <name>beta-alanine</name>
        <dbReference type="ChEBI" id="CHEBI:57966"/>
    </ligand>
</feature>
<feature type="binding site" evidence="1">
    <location>
        <begin position="150"/>
        <end position="153"/>
    </location>
    <ligand>
        <name>ATP</name>
        <dbReference type="ChEBI" id="CHEBI:30616"/>
    </ligand>
</feature>
<feature type="binding site" evidence="1">
    <location>
        <position position="156"/>
    </location>
    <ligand>
        <name>(R)-pantoate</name>
        <dbReference type="ChEBI" id="CHEBI:15980"/>
    </ligand>
</feature>
<feature type="binding site" evidence="1">
    <location>
        <position position="179"/>
    </location>
    <ligand>
        <name>ATP</name>
        <dbReference type="ChEBI" id="CHEBI:30616"/>
    </ligand>
</feature>
<feature type="binding site" evidence="1">
    <location>
        <begin position="187"/>
        <end position="190"/>
    </location>
    <ligand>
        <name>ATP</name>
        <dbReference type="ChEBI" id="CHEBI:30616"/>
    </ligand>
</feature>
<comment type="function">
    <text evidence="1">Catalyzes the condensation of pantoate with beta-alanine in an ATP-dependent reaction via a pantoyl-adenylate intermediate.</text>
</comment>
<comment type="catalytic activity">
    <reaction evidence="1">
        <text>(R)-pantoate + beta-alanine + ATP = (R)-pantothenate + AMP + diphosphate + H(+)</text>
        <dbReference type="Rhea" id="RHEA:10912"/>
        <dbReference type="ChEBI" id="CHEBI:15378"/>
        <dbReference type="ChEBI" id="CHEBI:15980"/>
        <dbReference type="ChEBI" id="CHEBI:29032"/>
        <dbReference type="ChEBI" id="CHEBI:30616"/>
        <dbReference type="ChEBI" id="CHEBI:33019"/>
        <dbReference type="ChEBI" id="CHEBI:57966"/>
        <dbReference type="ChEBI" id="CHEBI:456215"/>
        <dbReference type="EC" id="6.3.2.1"/>
    </reaction>
</comment>
<comment type="pathway">
    <text evidence="1">Cofactor biosynthesis; (R)-pantothenate biosynthesis; (R)-pantothenate from (R)-pantoate and beta-alanine: step 1/1.</text>
</comment>
<comment type="subunit">
    <text evidence="1">Homodimer.</text>
</comment>
<comment type="subcellular location">
    <subcellularLocation>
        <location evidence="1">Cytoplasm</location>
    </subcellularLocation>
</comment>
<comment type="miscellaneous">
    <text evidence="1">The reaction proceeds by a bi uni uni bi ping pong mechanism.</text>
</comment>
<comment type="similarity">
    <text evidence="1">Belongs to the pantothenate synthetase family.</text>
</comment>
<name>PANC_XANCB</name>
<dbReference type="EC" id="6.3.2.1" evidence="1"/>
<dbReference type="EMBL" id="AM920689">
    <property type="protein sequence ID" value="CAP51854.1"/>
    <property type="molecule type" value="Genomic_DNA"/>
</dbReference>
<dbReference type="SMR" id="B0RTU0"/>
<dbReference type="KEGG" id="xca:xcc-b100_2494"/>
<dbReference type="HOGENOM" id="CLU_047148_0_0_6"/>
<dbReference type="UniPathway" id="UPA00028">
    <property type="reaction ID" value="UER00005"/>
</dbReference>
<dbReference type="Proteomes" id="UP000001188">
    <property type="component" value="Chromosome"/>
</dbReference>
<dbReference type="GO" id="GO:0005829">
    <property type="term" value="C:cytosol"/>
    <property type="evidence" value="ECO:0007669"/>
    <property type="project" value="TreeGrafter"/>
</dbReference>
<dbReference type="GO" id="GO:0005524">
    <property type="term" value="F:ATP binding"/>
    <property type="evidence" value="ECO:0007669"/>
    <property type="project" value="UniProtKB-KW"/>
</dbReference>
<dbReference type="GO" id="GO:0004592">
    <property type="term" value="F:pantoate-beta-alanine ligase activity"/>
    <property type="evidence" value="ECO:0007669"/>
    <property type="project" value="UniProtKB-UniRule"/>
</dbReference>
<dbReference type="GO" id="GO:0015940">
    <property type="term" value="P:pantothenate biosynthetic process"/>
    <property type="evidence" value="ECO:0007669"/>
    <property type="project" value="UniProtKB-UniRule"/>
</dbReference>
<dbReference type="CDD" id="cd00560">
    <property type="entry name" value="PanC"/>
    <property type="match status" value="1"/>
</dbReference>
<dbReference type="FunFam" id="3.40.50.620:FF:000114">
    <property type="entry name" value="Pantothenate synthetase"/>
    <property type="match status" value="1"/>
</dbReference>
<dbReference type="Gene3D" id="3.40.50.620">
    <property type="entry name" value="HUPs"/>
    <property type="match status" value="1"/>
</dbReference>
<dbReference type="Gene3D" id="3.30.1300.10">
    <property type="entry name" value="Pantoate-beta-alanine ligase, C-terminal domain"/>
    <property type="match status" value="1"/>
</dbReference>
<dbReference type="HAMAP" id="MF_00158">
    <property type="entry name" value="PanC"/>
    <property type="match status" value="1"/>
</dbReference>
<dbReference type="InterPro" id="IPR003721">
    <property type="entry name" value="Pantoate_ligase"/>
</dbReference>
<dbReference type="InterPro" id="IPR042176">
    <property type="entry name" value="Pantoate_ligase_C"/>
</dbReference>
<dbReference type="InterPro" id="IPR014729">
    <property type="entry name" value="Rossmann-like_a/b/a_fold"/>
</dbReference>
<dbReference type="NCBIfam" id="TIGR00018">
    <property type="entry name" value="panC"/>
    <property type="match status" value="1"/>
</dbReference>
<dbReference type="PANTHER" id="PTHR21299">
    <property type="entry name" value="CYTIDYLATE KINASE/PANTOATE-BETA-ALANINE LIGASE"/>
    <property type="match status" value="1"/>
</dbReference>
<dbReference type="PANTHER" id="PTHR21299:SF1">
    <property type="entry name" value="PANTOATE--BETA-ALANINE LIGASE"/>
    <property type="match status" value="1"/>
</dbReference>
<dbReference type="Pfam" id="PF02569">
    <property type="entry name" value="Pantoate_ligase"/>
    <property type="match status" value="1"/>
</dbReference>
<dbReference type="SUPFAM" id="SSF52374">
    <property type="entry name" value="Nucleotidylyl transferase"/>
    <property type="match status" value="1"/>
</dbReference>
<keyword id="KW-0067">ATP-binding</keyword>
<keyword id="KW-0963">Cytoplasm</keyword>
<keyword id="KW-0436">Ligase</keyword>
<keyword id="KW-0547">Nucleotide-binding</keyword>
<keyword id="KW-0566">Pantothenate biosynthesis</keyword>
<protein>
    <recommendedName>
        <fullName evidence="1">Pantothenate synthetase</fullName>
        <shortName evidence="1">PS</shortName>
        <ecNumber evidence="1">6.3.2.1</ecNumber>
    </recommendedName>
    <alternativeName>
        <fullName evidence="1">Pantoate--beta-alanine ligase</fullName>
    </alternativeName>
    <alternativeName>
        <fullName evidence="1">Pantoate-activating enzyme</fullName>
    </alternativeName>
</protein>